<sequence length="299" mass="31248">MREFGNPLGDRPPLDELARTDLLLDALAEREEVDFADPRDDALAALLGQWRDDLRWPPASALVSQDEAVAALRAGVAQRRRARRSLAAVGSVAAALLVLSGFGAVVADARPGDLLYGLHAMMFNRSRVSDDQIVLSAKANLAKVEQMIAQGQWAEAQDELAEVSSTVQAVTDGSRRQDLINEVNLLNTKVETRDPNATLRPGSPSNPAAPGSVGNSWTPLAPVVEPPTPPTPASAAEPSMSAGVSESPMPNSTSTVAASPSTPSSKPEPGSIDPSLEPADEATNPAGQPAPETPVSPTH</sequence>
<dbReference type="EMBL" id="AL123456">
    <property type="protein sequence ID" value="CCP46235.1"/>
    <property type="molecule type" value="Genomic_DNA"/>
</dbReference>
<dbReference type="PIR" id="B70737">
    <property type="entry name" value="B70737"/>
</dbReference>
<dbReference type="RefSeq" id="NP_217930.1">
    <property type="nucleotide sequence ID" value="NC_000962.3"/>
</dbReference>
<dbReference type="RefSeq" id="WP_003418011.1">
    <property type="nucleotide sequence ID" value="NZ_NVQJ01000027.1"/>
</dbReference>
<dbReference type="PDB" id="3VEP">
    <property type="method" value="X-ray"/>
    <property type="resolution" value="2.50 A"/>
    <property type="chains" value="C/G/J/X=1-80"/>
</dbReference>
<dbReference type="PDBsum" id="3VEP"/>
<dbReference type="SMR" id="P9WJ71"/>
<dbReference type="STRING" id="83332.Rv3413c"/>
<dbReference type="PaxDb" id="83332-Rv3413c"/>
<dbReference type="DNASU" id="887925"/>
<dbReference type="GeneID" id="887925"/>
<dbReference type="KEGG" id="mtu:Rv3413c"/>
<dbReference type="KEGG" id="mtv:RVBD_3413c"/>
<dbReference type="TubercuList" id="Rv3413c"/>
<dbReference type="eggNOG" id="ENOG5033V1E">
    <property type="taxonomic scope" value="Bacteria"/>
</dbReference>
<dbReference type="InParanoid" id="P9WJ71"/>
<dbReference type="OrthoDB" id="4762520at2"/>
<dbReference type="Proteomes" id="UP000001584">
    <property type="component" value="Chromosome"/>
</dbReference>
<dbReference type="GO" id="GO:0005576">
    <property type="term" value="C:extracellular region"/>
    <property type="evidence" value="ECO:0007005"/>
    <property type="project" value="MTBBASE"/>
</dbReference>
<dbReference type="GO" id="GO:0005886">
    <property type="term" value="C:plasma membrane"/>
    <property type="evidence" value="ECO:0007669"/>
    <property type="project" value="UniProtKB-SubCell"/>
</dbReference>
<dbReference type="Gene3D" id="6.10.250.1300">
    <property type="match status" value="1"/>
</dbReference>
<dbReference type="InterPro" id="IPR031928">
    <property type="entry name" value="RsdA_SigD-bd"/>
</dbReference>
<dbReference type="Pfam" id="PF16751">
    <property type="entry name" value="RsdA_SigD_bd"/>
    <property type="match status" value="1"/>
</dbReference>
<name>RSDA_MYCTU</name>
<reference key="1">
    <citation type="journal article" date="1998" name="Nature">
        <title>Deciphering the biology of Mycobacterium tuberculosis from the complete genome sequence.</title>
        <authorList>
            <person name="Cole S.T."/>
            <person name="Brosch R."/>
            <person name="Parkhill J."/>
            <person name="Garnier T."/>
            <person name="Churcher C.M."/>
            <person name="Harris D.E."/>
            <person name="Gordon S.V."/>
            <person name="Eiglmeier K."/>
            <person name="Gas S."/>
            <person name="Barry C.E. III"/>
            <person name="Tekaia F."/>
            <person name="Badcock K."/>
            <person name="Basham D."/>
            <person name="Brown D."/>
            <person name="Chillingworth T."/>
            <person name="Connor R."/>
            <person name="Davies R.M."/>
            <person name="Devlin K."/>
            <person name="Feltwell T."/>
            <person name="Gentles S."/>
            <person name="Hamlin N."/>
            <person name="Holroyd S."/>
            <person name="Hornsby T."/>
            <person name="Jagels K."/>
            <person name="Krogh A."/>
            <person name="McLean J."/>
            <person name="Moule S."/>
            <person name="Murphy L.D."/>
            <person name="Oliver S."/>
            <person name="Osborne J."/>
            <person name="Quail M.A."/>
            <person name="Rajandream M.A."/>
            <person name="Rogers J."/>
            <person name="Rutter S."/>
            <person name="Seeger K."/>
            <person name="Skelton S."/>
            <person name="Squares S."/>
            <person name="Squares R."/>
            <person name="Sulston J.E."/>
            <person name="Taylor K."/>
            <person name="Whitehead S."/>
            <person name="Barrell B.G."/>
        </authorList>
    </citation>
    <scope>NUCLEOTIDE SEQUENCE [LARGE SCALE GENOMIC DNA]</scope>
    <source>
        <strain>ATCC 25618 / H37Rv</strain>
    </source>
</reference>
<reference key="2">
    <citation type="journal article" date="2004" name="J. Bacteriol.">
        <title>Transcription regulation by the Mycobacterium tuberculosis alternative sigma factor SigD and its role in virulence.</title>
        <authorList>
            <person name="Raman S."/>
            <person name="Hazra R."/>
            <person name="Dascher C.C."/>
            <person name="Husson R.N."/>
        </authorList>
    </citation>
    <scope>INDUCTION</scope>
    <source>
        <strain>ATCC 25618 / H37Rv</strain>
    </source>
</reference>
<reference key="3">
    <citation type="journal article" date="2010" name="Protein Expr. Purif.">
        <title>Over-expression and purification strategies for recombinant multi-protein oligomers: a case study of Mycobacterium tuberculosis sigma/anti-sigma factor protein complexes.</title>
        <authorList>
            <person name="Thakur K.G."/>
            <person name="Jaiswal R.K."/>
            <person name="Shukla J.K."/>
            <person name="Praveena T."/>
            <person name="Gopal B."/>
        </authorList>
    </citation>
    <scope>INTERACTION WITH SIGMA FACTOR SIGD</scope>
</reference>
<reference key="4">
    <citation type="journal article" date="2011" name="Mol. Cell. Proteomics">
        <title>Proteogenomic analysis of Mycobacterium tuberculosis by high resolution mass spectrometry.</title>
        <authorList>
            <person name="Kelkar D.S."/>
            <person name="Kumar D."/>
            <person name="Kumar P."/>
            <person name="Balakrishnan L."/>
            <person name="Muthusamy B."/>
            <person name="Yadav A.K."/>
            <person name="Shrivastava P."/>
            <person name="Marimuthu A."/>
            <person name="Anand S."/>
            <person name="Sundaram H."/>
            <person name="Kingsbury R."/>
            <person name="Harsha H.C."/>
            <person name="Nair B."/>
            <person name="Prasad T.S."/>
            <person name="Chauhan D.S."/>
            <person name="Katoch K."/>
            <person name="Katoch V.M."/>
            <person name="Kumar P."/>
            <person name="Chaerkady R."/>
            <person name="Ramachandran S."/>
            <person name="Dash D."/>
            <person name="Pandey A."/>
        </authorList>
    </citation>
    <scope>IDENTIFICATION BY MASS SPECTROMETRY [LARGE SCALE ANALYSIS]</scope>
    <source>
        <strain>ATCC 25618 / H37Rv</strain>
    </source>
</reference>
<reference key="5">
    <citation type="journal article" date="2013" name="Nucleic Acids Res.">
        <title>Mycobacterium tuberculosis RsdA provides a conformational rationale for selective regulation of sigma-factor activity by proteolysis.</title>
        <authorList>
            <person name="Jaiswal R.K."/>
            <person name="Prabha T.S."/>
            <person name="Manjeera G."/>
            <person name="Gopal B."/>
        </authorList>
    </citation>
    <scope>X-RAY CRYSTALLOGRAPHY (2.5 ANGSTROMS) OF 1-80 IN COMPLEX WITH SIGD</scope>
    <scope>INTERACTION WITH SIGD</scope>
    <scope>DOMAIN</scope>
    <scope>CLEAVAGE BY CLP PROTEASE</scope>
    <scope>MUTAGENESIS OF TRP-50 AND 93-ALA-ALA-94</scope>
    <source>
        <strain>ATCC 25618 / H37Rv</strain>
    </source>
</reference>
<organism>
    <name type="scientific">Mycobacterium tuberculosis (strain ATCC 25618 / H37Rv)</name>
    <dbReference type="NCBI Taxonomy" id="83332"/>
    <lineage>
        <taxon>Bacteria</taxon>
        <taxon>Bacillati</taxon>
        <taxon>Actinomycetota</taxon>
        <taxon>Actinomycetes</taxon>
        <taxon>Mycobacteriales</taxon>
        <taxon>Mycobacteriaceae</taxon>
        <taxon>Mycobacterium</taxon>
        <taxon>Mycobacterium tuberculosis complex</taxon>
    </lineage>
</organism>
<accession>P9WJ71</accession>
<accession>L0TFJ3</accession>
<accession>P65081</accession>
<accession>Q50713</accession>
<proteinExistence type="evidence at protein level"/>
<feature type="chain" id="PRO_0000104133" description="Anti-sigma-D factor RsdA">
    <location>
        <begin position="1"/>
        <end position="299"/>
    </location>
</feature>
<feature type="topological domain" description="Cytoplasmic" evidence="1">
    <location>
        <begin position="1"/>
        <end position="85"/>
    </location>
</feature>
<feature type="transmembrane region" description="Helical" evidence="1">
    <location>
        <begin position="86"/>
        <end position="106"/>
    </location>
</feature>
<feature type="topological domain" description="Extracellular" evidence="1">
    <location>
        <begin position="107"/>
        <end position="299"/>
    </location>
</feature>
<feature type="region of interest" description="Interaction with sigma factor">
    <location>
        <begin position="24"/>
        <end position="50"/>
    </location>
</feature>
<feature type="region of interest" description="Disordered" evidence="2">
    <location>
        <begin position="187"/>
        <end position="299"/>
    </location>
</feature>
<feature type="compositionally biased region" description="Low complexity" evidence="2">
    <location>
        <begin position="201"/>
        <end position="212"/>
    </location>
</feature>
<feature type="compositionally biased region" description="Low complexity" evidence="2">
    <location>
        <begin position="250"/>
        <end position="271"/>
    </location>
</feature>
<feature type="mutagenesis site" description="10-fold reduction in binding to SigD." evidence="5">
    <original>W</original>
    <variation>A</variation>
    <location>
        <position position="50"/>
    </location>
</feature>
<feature type="mutagenesis site" description="No proteolysis by ClpP1-ClpP2-ClpX." evidence="5">
    <original>AA</original>
    <variation>DD</variation>
    <location>
        <begin position="93"/>
        <end position="94"/>
    </location>
</feature>
<feature type="helix" evidence="7">
    <location>
        <begin position="13"/>
        <end position="28"/>
    </location>
</feature>
<feature type="helix" evidence="7">
    <location>
        <begin position="38"/>
        <end position="55"/>
    </location>
</feature>
<evidence type="ECO:0000255" key="1"/>
<evidence type="ECO:0000256" key="2">
    <source>
        <dbReference type="SAM" id="MobiDB-lite"/>
    </source>
</evidence>
<evidence type="ECO:0000269" key="3">
    <source>
    </source>
</evidence>
<evidence type="ECO:0000269" key="4">
    <source>
    </source>
</evidence>
<evidence type="ECO:0000269" key="5">
    <source>
    </source>
</evidence>
<evidence type="ECO:0000305" key="6"/>
<evidence type="ECO:0007829" key="7">
    <source>
        <dbReference type="PDB" id="3VEP"/>
    </source>
</evidence>
<protein>
    <recommendedName>
        <fullName>Anti-sigma-D factor RsdA</fullName>
    </recommendedName>
    <alternativeName>
        <fullName>Regulator of SigD</fullName>
    </alternativeName>
    <alternativeName>
        <fullName>Sigma-D anti-sigma factor RsdA</fullName>
    </alternativeName>
</protein>
<comment type="function">
    <text>An anti-sigma factor for extracytoplasmic function (ECF) sigma factor SigD. ECF sigma factors are held in an inactive form by an anti-sigma factor until released by regulated intramembrane proteolysis (RIP). RIP occurs when an extracytoplasmic signal triggers a concerted proteolytic cascade to transmit information and elicit cellular responses. The membrane-spanning regulatory substrate protein is first cut extracytoplasmically (site-1 protease, S1P), then within the membrane itself (site-2 protease, S2P), while cytoplasmic proteases finish degrading the regulatory protein, liberating the sigma factor. Neither S1P nor S2P proteases have been so far identified for this anti-sigma factor.</text>
</comment>
<comment type="subunit">
    <text evidence="4 5">Interacts with ECF RNA polymerase sigma factor SigD; this should inhibit the interaction of SigD with the RNA polymerase catalytic core.</text>
</comment>
<comment type="subcellular location">
    <subcellularLocation>
        <location evidence="6">Cell membrane</location>
        <topology evidence="6">Single-pass membrane protein</topology>
    </subcellularLocation>
</comment>
<comment type="induction">
    <text evidence="3">Positively regulated by alternative sigma factor SigD.</text>
</comment>
<comment type="domain">
    <text evidence="5">The cytosolic domain interacts with ECF sigma factor SigD.</text>
</comment>
<comment type="PTM">
    <text>The cytosolic fragment (residues 1-94) in both free and SigD-associated form, is degraded by a ClpP1-ClpP2-ClpX complex, as would be expected after S1P and S2P intramembrane proteolysis. This releases SigD so that it may bind to the RNA polymerase catalytic core.</text>
</comment>
<keyword id="KW-0002">3D-structure</keyword>
<keyword id="KW-1003">Cell membrane</keyword>
<keyword id="KW-0472">Membrane</keyword>
<keyword id="KW-1185">Reference proteome</keyword>
<keyword id="KW-0804">Transcription</keyword>
<keyword id="KW-0805">Transcription regulation</keyword>
<keyword id="KW-0812">Transmembrane</keyword>
<keyword id="KW-1133">Transmembrane helix</keyword>
<gene>
    <name type="primary">rsdA</name>
    <name type="ordered locus">Rv3413c</name>
    <name type="ORF">MTCY78.16</name>
</gene>